<comment type="function">
    <text evidence="1">Involved in peptide bond synthesis. Alleviates ribosome stalling that occurs when 3 or more consecutive Pro residues or the sequence PPG is present in a protein, possibly by augmenting the peptidyl transferase activity of the ribosome. Modification of Lys-34 is required for alleviation.</text>
</comment>
<comment type="pathway">
    <text evidence="1">Protein biosynthesis; polypeptide chain elongation.</text>
</comment>
<comment type="subcellular location">
    <subcellularLocation>
        <location evidence="1">Cytoplasm</location>
    </subcellularLocation>
</comment>
<comment type="PTM">
    <text evidence="1">May be beta-lysylated on the epsilon-amino group of Lys-34 by the combined action of EpmA and EpmB, and then hydroxylated on the C5 position of the same residue by EpmC (if this protein is present). Lysylation is critical for the stimulatory effect of EF-P on peptide-bond formation. The lysylation moiety may extend toward the peptidyltransferase center and stabilize the terminal 3-CCA end of the tRNA. Hydroxylation of the C5 position on Lys-34 may allow additional potential stabilizing hydrogen-bond interactions with the P-tRNA.</text>
</comment>
<comment type="similarity">
    <text evidence="1">Belongs to the elongation factor P family.</text>
</comment>
<feature type="chain" id="PRO_1000010733" description="Elongation factor P">
    <location>
        <begin position="1"/>
        <end position="189"/>
    </location>
</feature>
<feature type="modified residue" description="N6-(3,6-diaminohexanoyl)-5-hydroxylysine" evidence="1">
    <location>
        <position position="34"/>
    </location>
</feature>
<proteinExistence type="inferred from homology"/>
<gene>
    <name evidence="1" type="primary">efp</name>
    <name type="ordered locus">DNO_1326</name>
</gene>
<protein>
    <recommendedName>
        <fullName evidence="1">Elongation factor P</fullName>
        <shortName evidence="1">EF-P</shortName>
    </recommendedName>
</protein>
<reference key="1">
    <citation type="journal article" date="2007" name="Nat. Biotechnol.">
        <title>Genome sequence and identification of candidate vaccine antigens from the animal pathogen Dichelobacter nodosus.</title>
        <authorList>
            <person name="Myers G.S.A."/>
            <person name="Parker D."/>
            <person name="Al-Hasani K."/>
            <person name="Kennan R.M."/>
            <person name="Seemann T."/>
            <person name="Ren Q."/>
            <person name="Badger J.H."/>
            <person name="Selengut J.D."/>
            <person name="Deboy R.T."/>
            <person name="Tettelin H."/>
            <person name="Boyce J.D."/>
            <person name="McCarl V.P."/>
            <person name="Han X."/>
            <person name="Nelson W.C."/>
            <person name="Madupu R."/>
            <person name="Mohamoud Y."/>
            <person name="Holley T."/>
            <person name="Fedorova N."/>
            <person name="Khouri H."/>
            <person name="Bottomley S.P."/>
            <person name="Whittington R.J."/>
            <person name="Adler B."/>
            <person name="Songer J.G."/>
            <person name="Rood J.I."/>
            <person name="Paulsen I.T."/>
        </authorList>
    </citation>
    <scope>NUCLEOTIDE SEQUENCE [LARGE SCALE GENOMIC DNA]</scope>
    <source>
        <strain>VCS1703A</strain>
    </source>
</reference>
<name>EFP_DICNV</name>
<sequence length="189" mass="21045">MATFSTNEFRGGLKIMLDGDPYTIVENEFVKPGKGQAFNRTKVRNLKTGRVLERTFKSGESVEAADVLEMNMQYLYKDEDNWYFMNPETFEQLPAAQAAVADAEKWLLEQDECTVVLWNNNIISVTPPNFVERKIVDTDPGLRGDTSGGGGKPATLETGAVVRVPLFLNIGDTIKVDTRSGEYLGRAKE</sequence>
<accession>A5EX42</accession>
<organism>
    <name type="scientific">Dichelobacter nodosus (strain VCS1703A)</name>
    <dbReference type="NCBI Taxonomy" id="246195"/>
    <lineage>
        <taxon>Bacteria</taxon>
        <taxon>Pseudomonadati</taxon>
        <taxon>Pseudomonadota</taxon>
        <taxon>Gammaproteobacteria</taxon>
        <taxon>Cardiobacteriales</taxon>
        <taxon>Cardiobacteriaceae</taxon>
        <taxon>Dichelobacter</taxon>
    </lineage>
</organism>
<dbReference type="EMBL" id="CP000513">
    <property type="protein sequence ID" value="ABQ13952.1"/>
    <property type="molecule type" value="Genomic_DNA"/>
</dbReference>
<dbReference type="RefSeq" id="WP_012031610.1">
    <property type="nucleotide sequence ID" value="NC_009446.1"/>
</dbReference>
<dbReference type="SMR" id="A5EX42"/>
<dbReference type="STRING" id="246195.DNO_1326"/>
<dbReference type="KEGG" id="dno:DNO_1326"/>
<dbReference type="eggNOG" id="COG0231">
    <property type="taxonomic scope" value="Bacteria"/>
</dbReference>
<dbReference type="HOGENOM" id="CLU_074944_0_0_6"/>
<dbReference type="OrthoDB" id="9801844at2"/>
<dbReference type="UniPathway" id="UPA00345"/>
<dbReference type="Proteomes" id="UP000000248">
    <property type="component" value="Chromosome"/>
</dbReference>
<dbReference type="GO" id="GO:0005737">
    <property type="term" value="C:cytoplasm"/>
    <property type="evidence" value="ECO:0007669"/>
    <property type="project" value="UniProtKB-SubCell"/>
</dbReference>
<dbReference type="GO" id="GO:0003746">
    <property type="term" value="F:translation elongation factor activity"/>
    <property type="evidence" value="ECO:0007669"/>
    <property type="project" value="UniProtKB-UniRule"/>
</dbReference>
<dbReference type="GO" id="GO:0043043">
    <property type="term" value="P:peptide biosynthetic process"/>
    <property type="evidence" value="ECO:0007669"/>
    <property type="project" value="InterPro"/>
</dbReference>
<dbReference type="CDD" id="cd04470">
    <property type="entry name" value="S1_EF-P_repeat_1"/>
    <property type="match status" value="1"/>
</dbReference>
<dbReference type="CDD" id="cd05794">
    <property type="entry name" value="S1_EF-P_repeat_2"/>
    <property type="match status" value="1"/>
</dbReference>
<dbReference type="FunFam" id="2.30.30.30:FF:000003">
    <property type="entry name" value="Elongation factor P"/>
    <property type="match status" value="1"/>
</dbReference>
<dbReference type="FunFam" id="2.40.50.140:FF:000004">
    <property type="entry name" value="Elongation factor P"/>
    <property type="match status" value="1"/>
</dbReference>
<dbReference type="FunFam" id="2.40.50.140:FF:000009">
    <property type="entry name" value="Elongation factor P"/>
    <property type="match status" value="1"/>
</dbReference>
<dbReference type="Gene3D" id="2.30.30.30">
    <property type="match status" value="1"/>
</dbReference>
<dbReference type="Gene3D" id="2.40.50.140">
    <property type="entry name" value="Nucleic acid-binding proteins"/>
    <property type="match status" value="2"/>
</dbReference>
<dbReference type="HAMAP" id="MF_00141">
    <property type="entry name" value="EF_P"/>
    <property type="match status" value="1"/>
</dbReference>
<dbReference type="InterPro" id="IPR015365">
    <property type="entry name" value="Elong-fact-P_C"/>
</dbReference>
<dbReference type="InterPro" id="IPR012340">
    <property type="entry name" value="NA-bd_OB-fold"/>
</dbReference>
<dbReference type="InterPro" id="IPR014722">
    <property type="entry name" value="Rib_uL2_dom2"/>
</dbReference>
<dbReference type="InterPro" id="IPR020599">
    <property type="entry name" value="Transl_elong_fac_P/YeiP"/>
</dbReference>
<dbReference type="InterPro" id="IPR013185">
    <property type="entry name" value="Transl_elong_KOW-like"/>
</dbReference>
<dbReference type="InterPro" id="IPR001059">
    <property type="entry name" value="Transl_elong_P/YeiP_cen"/>
</dbReference>
<dbReference type="InterPro" id="IPR013852">
    <property type="entry name" value="Transl_elong_P/YeiP_CS"/>
</dbReference>
<dbReference type="InterPro" id="IPR011768">
    <property type="entry name" value="Transl_elongation_fac_P"/>
</dbReference>
<dbReference type="InterPro" id="IPR008991">
    <property type="entry name" value="Translation_prot_SH3-like_sf"/>
</dbReference>
<dbReference type="NCBIfam" id="TIGR00038">
    <property type="entry name" value="efp"/>
    <property type="match status" value="1"/>
</dbReference>
<dbReference type="NCBIfam" id="NF001810">
    <property type="entry name" value="PRK00529.1"/>
    <property type="match status" value="1"/>
</dbReference>
<dbReference type="PANTHER" id="PTHR30053">
    <property type="entry name" value="ELONGATION FACTOR P"/>
    <property type="match status" value="1"/>
</dbReference>
<dbReference type="PANTHER" id="PTHR30053:SF12">
    <property type="entry name" value="ELONGATION FACTOR P (EF-P) FAMILY PROTEIN"/>
    <property type="match status" value="1"/>
</dbReference>
<dbReference type="Pfam" id="PF01132">
    <property type="entry name" value="EFP"/>
    <property type="match status" value="1"/>
</dbReference>
<dbReference type="Pfam" id="PF08207">
    <property type="entry name" value="EFP_N"/>
    <property type="match status" value="1"/>
</dbReference>
<dbReference type="Pfam" id="PF09285">
    <property type="entry name" value="Elong-fact-P_C"/>
    <property type="match status" value="1"/>
</dbReference>
<dbReference type="PIRSF" id="PIRSF005901">
    <property type="entry name" value="EF-P"/>
    <property type="match status" value="1"/>
</dbReference>
<dbReference type="SMART" id="SM01185">
    <property type="entry name" value="EFP"/>
    <property type="match status" value="1"/>
</dbReference>
<dbReference type="SMART" id="SM00841">
    <property type="entry name" value="Elong-fact-P_C"/>
    <property type="match status" value="1"/>
</dbReference>
<dbReference type="SUPFAM" id="SSF50249">
    <property type="entry name" value="Nucleic acid-binding proteins"/>
    <property type="match status" value="2"/>
</dbReference>
<dbReference type="SUPFAM" id="SSF50104">
    <property type="entry name" value="Translation proteins SH3-like domain"/>
    <property type="match status" value="1"/>
</dbReference>
<dbReference type="PROSITE" id="PS01275">
    <property type="entry name" value="EFP"/>
    <property type="match status" value="1"/>
</dbReference>
<keyword id="KW-0963">Cytoplasm</keyword>
<keyword id="KW-0251">Elongation factor</keyword>
<keyword id="KW-0379">Hydroxylation</keyword>
<keyword id="KW-0648">Protein biosynthesis</keyword>
<keyword id="KW-1185">Reference proteome</keyword>
<evidence type="ECO:0000255" key="1">
    <source>
        <dbReference type="HAMAP-Rule" id="MF_00141"/>
    </source>
</evidence>